<comment type="function">
    <text evidence="3 6 8">The 2-oxoglutarate dehydrogenase complex catalyzes the overall conversion of 2-oxoglutarate to succinyl-CoA and CO(2). It contains multiple copies of three enzymatic components: 2-oxoglutarate dehydrogenase (E1), dihydrolipoamide succinyltransferase (E2) and lipoamide dehydrogenase (E3).</text>
</comment>
<comment type="catalytic activity">
    <reaction>
        <text>N(6)-[(R)-lipoyl]-L-lysyl-[protein] + 2-oxoglutarate + H(+) = N(6)-[(R)-S(8)-succinyldihydrolipoyl]-L-lysyl-[protein] + CO2</text>
        <dbReference type="Rhea" id="RHEA:12188"/>
        <dbReference type="Rhea" id="RHEA-COMP:10474"/>
        <dbReference type="Rhea" id="RHEA-COMP:20092"/>
        <dbReference type="ChEBI" id="CHEBI:15378"/>
        <dbReference type="ChEBI" id="CHEBI:16526"/>
        <dbReference type="ChEBI" id="CHEBI:16810"/>
        <dbReference type="ChEBI" id="CHEBI:83099"/>
        <dbReference type="ChEBI" id="CHEBI:83120"/>
        <dbReference type="EC" id="1.2.4.2"/>
    </reaction>
</comment>
<comment type="cofactor">
    <cofactor>
        <name>thiamine diphosphate</name>
        <dbReference type="ChEBI" id="CHEBI:58937"/>
    </cofactor>
    <cofactor evidence="1">
        <name>Mg(2+)</name>
        <dbReference type="ChEBI" id="CHEBI:18420"/>
    </cofactor>
</comment>
<comment type="activity regulation">
    <text>Catabolite repressed.</text>
</comment>
<comment type="subunit">
    <text evidence="5 7">Component of the 2-oxoglutarate dehydrogenase complex (OGDC), also called alpha-ketoglutarate dehydrogenase (KGDH) complex. The copmplex is composed of the catalytic subunits OGDH (2-oxoglutarate dehydrogenase KGD1; also called E1 subunit), DLST (dihydrolipoamide succinyltransferase KGD2; also called E2 subunit) and DLD (dihydrolipoamide dehydrogenase LPD1; also called E3 subunit), and the assembly factor KGD4.</text>
</comment>
<comment type="interaction">
    <interactant intactId="EBI-12459">
        <id>P20967</id>
    </interactant>
    <interactant intactId="EBI-12464">
        <id>P19262</id>
        <label>KGD2</label>
    </interactant>
    <organismsDiffer>false</organismsDiffer>
    <experiments>7</experiments>
</comment>
<comment type="interaction">
    <interactant intactId="EBI-12459">
        <id>P20967</id>
    </interactant>
    <interactant intactId="EBI-16295">
        <id>P19955</id>
        <label>YMR31</label>
    </interactant>
    <organismsDiffer>false</organismsDiffer>
    <experiments>6</experiments>
</comment>
<comment type="subcellular location">
    <subcellularLocation>
        <location evidence="7">Mitochondrion</location>
    </subcellularLocation>
    <subcellularLocation>
        <location>Mitochondrion matrix</location>
    </subcellularLocation>
    <subcellularLocation>
        <location>Mitochondrion matrix</location>
        <location>Mitochondrion nucleoid</location>
    </subcellularLocation>
</comment>
<comment type="miscellaneous">
    <text evidence="4">Present with 14300 molecules/cell in log phase SD medium.</text>
</comment>
<comment type="similarity">
    <text evidence="9">Belongs to the alpha-ketoglutarate dehydrogenase family.</text>
</comment>
<dbReference type="EC" id="1.2.4.2"/>
<dbReference type="EMBL" id="M26390">
    <property type="protein sequence ID" value="AAA34721.1"/>
    <property type="molecule type" value="Genomic_DNA"/>
</dbReference>
<dbReference type="EMBL" id="Z46833">
    <property type="protein sequence ID" value="CAA86867.1"/>
    <property type="molecule type" value="Genomic_DNA"/>
</dbReference>
<dbReference type="EMBL" id="BK006942">
    <property type="protein sequence ID" value="DAA08428.1"/>
    <property type="molecule type" value="Genomic_DNA"/>
</dbReference>
<dbReference type="PIR" id="S49884">
    <property type="entry name" value="DEBY"/>
</dbReference>
<dbReference type="RefSeq" id="NP_012141.1">
    <property type="nucleotide sequence ID" value="NM_001179473.1"/>
</dbReference>
<dbReference type="SMR" id="P20967"/>
<dbReference type="BioGRID" id="34866">
    <property type="interactions" value="171"/>
</dbReference>
<dbReference type="ComplexPortal" id="CPX-1293">
    <property type="entry name" value="Mitochondrial 2-oxoglutarate dehydrogenase complex"/>
</dbReference>
<dbReference type="DIP" id="DIP-365N"/>
<dbReference type="FunCoup" id="P20967">
    <property type="interactions" value="771"/>
</dbReference>
<dbReference type="IntAct" id="P20967">
    <property type="interactions" value="71"/>
</dbReference>
<dbReference type="MINT" id="P20967"/>
<dbReference type="STRING" id="4932.YIL125W"/>
<dbReference type="iPTMnet" id="P20967"/>
<dbReference type="PaxDb" id="4932-YIL125W"/>
<dbReference type="PeptideAtlas" id="P20967"/>
<dbReference type="EnsemblFungi" id="YIL125W_mRNA">
    <property type="protein sequence ID" value="YIL125W"/>
    <property type="gene ID" value="YIL125W"/>
</dbReference>
<dbReference type="GeneID" id="854681"/>
<dbReference type="KEGG" id="sce:YIL125W"/>
<dbReference type="AGR" id="SGD:S000001387"/>
<dbReference type="SGD" id="S000001387">
    <property type="gene designation" value="KGD1"/>
</dbReference>
<dbReference type="VEuPathDB" id="FungiDB:YIL125W"/>
<dbReference type="eggNOG" id="KOG0450">
    <property type="taxonomic scope" value="Eukaryota"/>
</dbReference>
<dbReference type="GeneTree" id="ENSGT00950000183125"/>
<dbReference type="HOGENOM" id="CLU_004709_1_0_1"/>
<dbReference type="InParanoid" id="P20967"/>
<dbReference type="OMA" id="RDSYCRT"/>
<dbReference type="OrthoDB" id="413077at2759"/>
<dbReference type="BioCyc" id="YEAST:YIL125W-MONOMER"/>
<dbReference type="Reactome" id="R-SCE-6783984">
    <property type="pathway name" value="Glycine degradation"/>
</dbReference>
<dbReference type="Reactome" id="R-SCE-9837999">
    <property type="pathway name" value="Mitochondrial protein degradation"/>
</dbReference>
<dbReference type="Reactome" id="R-SCE-9853506">
    <property type="pathway name" value="OGDH complex synthesizes succinyl-CoA from 2-OG"/>
</dbReference>
<dbReference type="BioGRID-ORCS" id="854681">
    <property type="hits" value="3 hits in 10 CRISPR screens"/>
</dbReference>
<dbReference type="PRO" id="PR:P20967"/>
<dbReference type="Proteomes" id="UP000002311">
    <property type="component" value="Chromosome IX"/>
</dbReference>
<dbReference type="RNAct" id="P20967">
    <property type="molecule type" value="protein"/>
</dbReference>
<dbReference type="GO" id="GO:0042645">
    <property type="term" value="C:mitochondrial nucleoid"/>
    <property type="evidence" value="ECO:0000314"/>
    <property type="project" value="SGD"/>
</dbReference>
<dbReference type="GO" id="GO:0005739">
    <property type="term" value="C:mitochondrion"/>
    <property type="evidence" value="ECO:0000314"/>
    <property type="project" value="ComplexPortal"/>
</dbReference>
<dbReference type="GO" id="GO:0045252">
    <property type="term" value="C:oxoglutarate dehydrogenase complex"/>
    <property type="evidence" value="ECO:0000314"/>
    <property type="project" value="SGD"/>
</dbReference>
<dbReference type="GO" id="GO:0046872">
    <property type="term" value="F:metal ion binding"/>
    <property type="evidence" value="ECO:0007669"/>
    <property type="project" value="UniProtKB-KW"/>
</dbReference>
<dbReference type="GO" id="GO:0004591">
    <property type="term" value="F:oxoglutarate dehydrogenase (succinyl-transferring) activity"/>
    <property type="evidence" value="ECO:0000318"/>
    <property type="project" value="GO_Central"/>
</dbReference>
<dbReference type="GO" id="GO:0030976">
    <property type="term" value="F:thiamine pyrophosphate binding"/>
    <property type="evidence" value="ECO:0007669"/>
    <property type="project" value="InterPro"/>
</dbReference>
<dbReference type="GO" id="GO:0006103">
    <property type="term" value="P:2-oxoglutarate metabolic process"/>
    <property type="evidence" value="ECO:0000314"/>
    <property type="project" value="ComplexPortal"/>
</dbReference>
<dbReference type="GO" id="GO:0045333">
    <property type="term" value="P:cellular respiration"/>
    <property type="evidence" value="ECO:0000304"/>
    <property type="project" value="SGD"/>
</dbReference>
<dbReference type="GO" id="GO:0006099">
    <property type="term" value="P:tricarboxylic acid cycle"/>
    <property type="evidence" value="ECO:0000318"/>
    <property type="project" value="GO_Central"/>
</dbReference>
<dbReference type="CDD" id="cd02016">
    <property type="entry name" value="TPP_E1_OGDC_like"/>
    <property type="match status" value="1"/>
</dbReference>
<dbReference type="FunFam" id="1.10.287.1150:FF:000002">
    <property type="entry name" value="2-oxoglutarate dehydrogenase E1 component"/>
    <property type="match status" value="1"/>
</dbReference>
<dbReference type="FunFam" id="3.40.50.12470:FF:000003">
    <property type="entry name" value="2-oxoglutarate dehydrogenase E1 component"/>
    <property type="match status" value="1"/>
</dbReference>
<dbReference type="FunFam" id="3.40.50.11610:FF:000007">
    <property type="entry name" value="2-oxoglutarate dehydrogenase, E1 component"/>
    <property type="match status" value="1"/>
</dbReference>
<dbReference type="FunFam" id="3.40.50.970:FF:000002">
    <property type="entry name" value="2-oxoglutarate dehydrogenase, E1 component"/>
    <property type="match status" value="1"/>
</dbReference>
<dbReference type="Gene3D" id="3.40.50.12470">
    <property type="match status" value="1"/>
</dbReference>
<dbReference type="Gene3D" id="3.40.50.970">
    <property type="match status" value="1"/>
</dbReference>
<dbReference type="Gene3D" id="3.40.50.11610">
    <property type="entry name" value="Multifunctional 2-oxoglutarate metabolism enzyme, C-terminal domain"/>
    <property type="match status" value="1"/>
</dbReference>
<dbReference type="Gene3D" id="1.10.287.1150">
    <property type="entry name" value="TPP helical domain"/>
    <property type="match status" value="1"/>
</dbReference>
<dbReference type="InterPro" id="IPR032106">
    <property type="entry name" value="2-oxogl_dehyd_N"/>
</dbReference>
<dbReference type="InterPro" id="IPR011603">
    <property type="entry name" value="2oxoglutarate_DH_E1"/>
</dbReference>
<dbReference type="InterPro" id="IPR001017">
    <property type="entry name" value="DH_E1"/>
</dbReference>
<dbReference type="InterPro" id="IPR042179">
    <property type="entry name" value="KGD_C_sf"/>
</dbReference>
<dbReference type="InterPro" id="IPR031717">
    <property type="entry name" value="ODO-1/KGD_C"/>
</dbReference>
<dbReference type="InterPro" id="IPR029061">
    <property type="entry name" value="THDP-binding"/>
</dbReference>
<dbReference type="InterPro" id="IPR005475">
    <property type="entry name" value="Transketolase-like_Pyr-bd"/>
</dbReference>
<dbReference type="NCBIfam" id="TIGR00239">
    <property type="entry name" value="2oxo_dh_E1"/>
    <property type="match status" value="1"/>
</dbReference>
<dbReference type="NCBIfam" id="NF006914">
    <property type="entry name" value="PRK09404.1"/>
    <property type="match status" value="1"/>
</dbReference>
<dbReference type="NCBIfam" id="NF008907">
    <property type="entry name" value="PRK12270.1"/>
    <property type="match status" value="1"/>
</dbReference>
<dbReference type="PANTHER" id="PTHR23152:SF4">
    <property type="entry name" value="2-OXOADIPATE DEHYDROGENASE COMPLEX COMPONENT E1"/>
    <property type="match status" value="1"/>
</dbReference>
<dbReference type="PANTHER" id="PTHR23152">
    <property type="entry name" value="2-OXOGLUTARATE DEHYDROGENASE"/>
    <property type="match status" value="1"/>
</dbReference>
<dbReference type="Pfam" id="PF16078">
    <property type="entry name" value="2-oxogl_dehyd_N"/>
    <property type="match status" value="1"/>
</dbReference>
<dbReference type="Pfam" id="PF00676">
    <property type="entry name" value="E1_dh"/>
    <property type="match status" value="1"/>
</dbReference>
<dbReference type="Pfam" id="PF16870">
    <property type="entry name" value="OxoGdeHyase_C"/>
    <property type="match status" value="1"/>
</dbReference>
<dbReference type="Pfam" id="PF02779">
    <property type="entry name" value="Transket_pyr"/>
    <property type="match status" value="1"/>
</dbReference>
<dbReference type="PIRSF" id="PIRSF000157">
    <property type="entry name" value="Oxoglu_dh_E1"/>
    <property type="match status" value="1"/>
</dbReference>
<dbReference type="SMART" id="SM00861">
    <property type="entry name" value="Transket_pyr"/>
    <property type="match status" value="1"/>
</dbReference>
<dbReference type="SUPFAM" id="SSF52518">
    <property type="entry name" value="Thiamin diphosphate-binding fold (THDP-binding)"/>
    <property type="match status" value="2"/>
</dbReference>
<name>ODO1_YEAST</name>
<gene>
    <name type="primary">KGD1</name>
    <name type="synonym">OGD1</name>
    <name type="ordered locus">YIL125W</name>
</gene>
<accession>P20967</accession>
<accession>D6VVG2</accession>
<protein>
    <recommendedName>
        <fullName>2-oxoglutarate dehydrogenase, mitochondrial</fullName>
        <shortName>OGDH</shortName>
        <ecNumber>1.2.4.2</ecNumber>
    </recommendedName>
    <alternativeName>
        <fullName>2-oxoglutarate dehydrogenase complex component E1</fullName>
        <shortName>OGDC-E1</shortName>
        <shortName>OGDHC subunit E1</shortName>
    </alternativeName>
    <alternativeName>
        <fullName>Alpha-ketoglutarate dehydrogenase complex subunit E1</fullName>
        <shortName>alpha-KGDHC subunit E1</shortName>
    </alternativeName>
</protein>
<evidence type="ECO:0000250" key="1">
    <source>
        <dbReference type="UniProtKB" id="Q02218"/>
    </source>
</evidence>
<evidence type="ECO:0000255" key="2"/>
<evidence type="ECO:0000269" key="3">
    <source>
    </source>
</evidence>
<evidence type="ECO:0000269" key="4">
    <source>
    </source>
</evidence>
<evidence type="ECO:0000269" key="5">
    <source>
    </source>
</evidence>
<evidence type="ECO:0000269" key="6">
    <source>
    </source>
</evidence>
<evidence type="ECO:0000269" key="7">
    <source>
    </source>
</evidence>
<evidence type="ECO:0000269" key="8">
    <source>
    </source>
</evidence>
<evidence type="ECO:0000305" key="9"/>
<proteinExistence type="evidence at protein level"/>
<organism>
    <name type="scientific">Saccharomyces cerevisiae (strain ATCC 204508 / S288c)</name>
    <name type="common">Baker's yeast</name>
    <dbReference type="NCBI Taxonomy" id="559292"/>
    <lineage>
        <taxon>Eukaryota</taxon>
        <taxon>Fungi</taxon>
        <taxon>Dikarya</taxon>
        <taxon>Ascomycota</taxon>
        <taxon>Saccharomycotina</taxon>
        <taxon>Saccharomycetes</taxon>
        <taxon>Saccharomycetales</taxon>
        <taxon>Saccharomycetaceae</taxon>
        <taxon>Saccharomyces</taxon>
    </lineage>
</organism>
<sequence>MLRFVSSQTCRYSSRGLLKTSLLKNASTVKIVGRGLATTGTDNFLSTSNATYIDEMYQAWQKDPSSVHVSWDAYFKNMSNPKIPATKAFQAPPSISNFPQGTEAAPLGTAMTGSVDENVSIHLKVQLLCRAYQVRGHLKAHIDPLGISFGSNKNNPVPPELTLDYYGFSKHDLDKEINLGPGILPRFARDGKSKMSLKEIVDHLEKLYCSSYGVQYTHIPSKQKCDWLRERIEIPEPYQYTVDQKRQILDRLTWATSFESFLSTKFPNDKRFGLEGLESVVPGIKTLVDRSVELGVEDIVLGMAHRGRLNVLSNVVRKPNESIFSEFKGSSARDDIEGSGDVKYHLGMNYQRPTTSGKYVNLSLVANPSHLESQDPVVLGRTRALLHAKNDLKEKTKALGVLLHGDAAFAGQGVVYETMGFLTLPEYSTGGTIHVITNNQIGFTTDPRFARSTPYPSDLAKAIDAPIFHVNANDVEAVTFIFNLAAEWRHKFHTDAIIDVVGWRKHGHNETDQPSFTQPLMYKKIAKQKSVIDVYTEKLISEGTFSKKDIDEHKKWVWNLFEDAFEKAKDYVPSQREWLTAAWEGFKSPKELATEILPHEPTNVPESTLKELGKVLSSWPEGFEVHKNLKRILKNRGKSIETGEGIDWATGEALAFGTLVLDGQNVRVSGEDVERGTFSQRHAVLHDQQSEAIYTPLSTLNNEKADFTIANSSLSEYGVMGFEYGYSLTSPDYLVMWEAQFGDFANTAQVIIDQFIAGGEQKWKQRSGLVLSLPHGYDGQGPEHSSGRLERFLQLANEDPRYFPSEEKLQRQHQDCNFQVVYPTTPANLFHILRRQQHRQFRKPLALFFSKQLLRHPLARSSLSEFTEGGFQWIIEDIEHGKSIGTKEETKRLVLLSGQVYTALHKRRESLGDKTTAFLKIEQLHPFPFAQLRDSLNSYPNLEEIVWCQEEPLNMGSWAYTEPRLHTTLKETDKYKDFKVRYCGRNPSGAVAAGSKSLHLAEEDAFLKDVFQQS</sequence>
<feature type="transit peptide" description="Mitochondrion" evidence="2">
    <location>
        <begin position="1"/>
        <end position="30"/>
    </location>
</feature>
<feature type="chain" id="PRO_0000020436" description="2-oxoglutarate dehydrogenase, mitochondrial">
    <location>
        <begin position="31"/>
        <end position="1014"/>
    </location>
</feature>
<feature type="binding site" evidence="1">
    <location>
        <position position="306"/>
    </location>
    <ligand>
        <name>thiamine diphosphate</name>
        <dbReference type="ChEBI" id="CHEBI:58937"/>
    </ligand>
</feature>
<feature type="binding site" evidence="1">
    <location>
        <position position="406"/>
    </location>
    <ligand>
        <name>Mg(2+)</name>
        <dbReference type="ChEBI" id="CHEBI:18420"/>
    </ligand>
</feature>
<feature type="binding site" evidence="1">
    <location>
        <position position="406"/>
    </location>
    <ligand>
        <name>thiamine diphosphate</name>
        <dbReference type="ChEBI" id="CHEBI:58937"/>
    </ligand>
</feature>
<feature type="binding site" evidence="1">
    <location>
        <position position="439"/>
    </location>
    <ligand>
        <name>Mg(2+)</name>
        <dbReference type="ChEBI" id="CHEBI:18420"/>
    </ligand>
</feature>
<feature type="binding site" evidence="1">
    <location>
        <position position="439"/>
    </location>
    <ligand>
        <name>thiamine diphosphate</name>
        <dbReference type="ChEBI" id="CHEBI:58937"/>
    </ligand>
</feature>
<feature type="binding site" evidence="1">
    <location>
        <position position="441"/>
    </location>
    <ligand>
        <name>Mg(2+)</name>
        <dbReference type="ChEBI" id="CHEBI:18420"/>
    </ligand>
</feature>
<feature type="binding site" evidence="1">
    <location>
        <position position="441"/>
    </location>
    <ligand>
        <name>thiamine diphosphate</name>
        <dbReference type="ChEBI" id="CHEBI:58937"/>
    </ligand>
</feature>
<feature type="sequence conflict" description="In Ref. 1; AAA34721." evidence="9" ref="1">
    <original>SEF</original>
    <variation>LNL</variation>
    <location>
        <begin position="325"/>
        <end position="327"/>
    </location>
</feature>
<feature type="sequence conflict" description="In Ref. 1; AAA34721." evidence="9" ref="1">
    <original>Q</original>
    <variation>R</variation>
    <location>
        <position position="513"/>
    </location>
</feature>
<feature type="sequence conflict" description="In Ref. 1; AAA34721." evidence="9" ref="1">
    <original>A</original>
    <variation>T</variation>
    <location>
        <position position="568"/>
    </location>
</feature>
<keyword id="KW-0460">Magnesium</keyword>
<keyword id="KW-0479">Metal-binding</keyword>
<keyword id="KW-0496">Mitochondrion</keyword>
<keyword id="KW-1135">Mitochondrion nucleoid</keyword>
<keyword id="KW-0560">Oxidoreductase</keyword>
<keyword id="KW-1185">Reference proteome</keyword>
<keyword id="KW-0786">Thiamine pyrophosphate</keyword>
<keyword id="KW-0809">Transit peptide</keyword>
<keyword id="KW-0816">Tricarboxylic acid cycle</keyword>
<reference key="1">
    <citation type="journal article" date="1989" name="Mol. Cell. Biol.">
        <title>Structure and regulation of KGD1, the structural gene for yeast alpha-ketoglutarate dehydrogenase.</title>
        <authorList>
            <person name="Repetto B."/>
            <person name="Tzagoloff A."/>
        </authorList>
    </citation>
    <scope>NUCLEOTIDE SEQUENCE [GENOMIC DNA]</scope>
    <scope>FUNCTION</scope>
    <source>
        <strain>ATCC 208353 / W303-1A</strain>
    </source>
</reference>
<reference key="2">
    <citation type="journal article" date="1997" name="Nature">
        <title>The nucleotide sequence of Saccharomyces cerevisiae chromosome IX.</title>
        <authorList>
            <person name="Churcher C.M."/>
            <person name="Bowman S."/>
            <person name="Badcock K."/>
            <person name="Bankier A.T."/>
            <person name="Brown D."/>
            <person name="Chillingworth T."/>
            <person name="Connor R."/>
            <person name="Devlin K."/>
            <person name="Gentles S."/>
            <person name="Hamlin N."/>
            <person name="Harris D.E."/>
            <person name="Horsnell T."/>
            <person name="Hunt S."/>
            <person name="Jagels K."/>
            <person name="Jones M."/>
            <person name="Lye G."/>
            <person name="Moule S."/>
            <person name="Odell C."/>
            <person name="Pearson D."/>
            <person name="Rajandream M.A."/>
            <person name="Rice P."/>
            <person name="Rowley N."/>
            <person name="Skelton J."/>
            <person name="Smith V."/>
            <person name="Walsh S.V."/>
            <person name="Whitehead S."/>
            <person name="Barrell B.G."/>
        </authorList>
    </citation>
    <scope>NUCLEOTIDE SEQUENCE [LARGE SCALE GENOMIC DNA]</scope>
    <source>
        <strain>ATCC 204508 / S288c</strain>
    </source>
</reference>
<reference key="3">
    <citation type="journal article" date="2014" name="G3 (Bethesda)">
        <title>The reference genome sequence of Saccharomyces cerevisiae: Then and now.</title>
        <authorList>
            <person name="Engel S.R."/>
            <person name="Dietrich F.S."/>
            <person name="Fisk D.G."/>
            <person name="Binkley G."/>
            <person name="Balakrishnan R."/>
            <person name="Costanzo M.C."/>
            <person name="Dwight S.S."/>
            <person name="Hitz B.C."/>
            <person name="Karra K."/>
            <person name="Nash R.S."/>
            <person name="Weng S."/>
            <person name="Wong E.D."/>
            <person name="Lloyd P."/>
            <person name="Skrzypek M.S."/>
            <person name="Miyasato S.R."/>
            <person name="Simison M."/>
            <person name="Cherry J.M."/>
        </authorList>
    </citation>
    <scope>GENOME REANNOTATION</scope>
    <source>
        <strain>ATCC 204508 / S288c</strain>
    </source>
</reference>
<reference key="4">
    <citation type="journal article" date="1991" name="Mol. Cell. Biol.">
        <title>In vivo assembly of yeast mitochondrial alpha-ketoglutarate dehydrogenase complex.</title>
        <authorList>
            <person name="Repetto B."/>
            <person name="Tzagoloff A."/>
        </authorList>
    </citation>
    <scope>SUBUNIT</scope>
</reference>
<reference key="5">
    <citation type="journal article" date="1993" name="Curr. Genet.">
        <title>The ogd1 and kgd1 mutants lacking 2-oxoglutarate dehydrogenase activity in yeast are allelic and can be differentiated by the cloned amber suppressor.</title>
        <authorList>
            <person name="Mockovciakova D."/>
            <person name="Janitorova V."/>
            <person name="Zigova M."/>
            <person name="Kaclikova E."/>
            <person name="Zagulski M."/>
            <person name="Subik J."/>
        </authorList>
    </citation>
    <scope>FUNCTION</scope>
</reference>
<reference key="6">
    <citation type="journal article" date="2002" name="Protoplasma">
        <title>Identification of the YMN-1 antigen protein and biochemical analyses of protein components in the mitochondrial nucleoid fraction of the yeast Saccharomyces cerevisiae.</title>
        <authorList>
            <person name="Sato H."/>
            <person name="Tachifuji A."/>
            <person name="Tamura M."/>
            <person name="Miyakawa I."/>
        </authorList>
    </citation>
    <scope>FUNCTION</scope>
    <scope>SUBCELLULAR LOCATION</scope>
</reference>
<reference key="7">
    <citation type="journal article" date="2003" name="Nature">
        <title>Global analysis of protein localization in budding yeast.</title>
        <authorList>
            <person name="Huh W.-K."/>
            <person name="Falvo J.V."/>
            <person name="Gerke L.C."/>
            <person name="Carroll A.S."/>
            <person name="Howson R.W."/>
            <person name="Weissman J.S."/>
            <person name="O'Shea E.K."/>
        </authorList>
    </citation>
    <scope>SUBCELLULAR LOCATION [LARGE SCALE ANALYSIS]</scope>
</reference>
<reference key="8">
    <citation type="journal article" date="2003" name="Nature">
        <title>Global analysis of protein expression in yeast.</title>
        <authorList>
            <person name="Ghaemmaghami S."/>
            <person name="Huh W.-K."/>
            <person name="Bower K."/>
            <person name="Howson R.W."/>
            <person name="Belle A."/>
            <person name="Dephoure N."/>
            <person name="O'Shea E.K."/>
            <person name="Weissman J.S."/>
        </authorList>
    </citation>
    <scope>LEVEL OF PROTEIN EXPRESSION [LARGE SCALE ANALYSIS]</scope>
</reference>
<reference key="9">
    <citation type="journal article" date="2003" name="Proc. Natl. Acad. Sci. U.S.A.">
        <title>The proteome of Saccharomyces cerevisiae mitochondria.</title>
        <authorList>
            <person name="Sickmann A."/>
            <person name="Reinders J."/>
            <person name="Wagner Y."/>
            <person name="Joppich C."/>
            <person name="Zahedi R.P."/>
            <person name="Meyer H.E."/>
            <person name="Schoenfisch B."/>
            <person name="Perschil I."/>
            <person name="Chacinska A."/>
            <person name="Guiard B."/>
            <person name="Rehling P."/>
            <person name="Pfanner N."/>
            <person name="Meisinger C."/>
        </authorList>
    </citation>
    <scope>SUBCELLULAR LOCATION [LARGE SCALE ANALYSIS]</scope>
    <source>
        <strain>ATCC 76625 / YPH499</strain>
    </source>
</reference>
<reference key="10">
    <citation type="journal article" date="2014" name="Mol. Biol. Cell">
        <title>The novel component Kgd4 recruits the E3 subunit to the mitochondrial alpha-ketoglutarate dehydrogenase.</title>
        <authorList>
            <person name="Heublein M."/>
            <person name="Burguillos M.A."/>
            <person name="Voegtle F.N."/>
            <person name="Teixeira P.F."/>
            <person name="Imhof A."/>
            <person name="Meisinger C."/>
            <person name="Ott M."/>
        </authorList>
    </citation>
    <scope>SUBUNIT</scope>
    <scope>SUBCELLULAR LOCATION</scope>
</reference>